<gene>
    <name evidence="1" type="primary">gpsA</name>
    <name type="ordered locus">CTC_01139</name>
</gene>
<feature type="chain" id="PRO_0000137949" description="Glycerol-3-phosphate dehydrogenase [NAD(P)+]">
    <location>
        <begin position="1"/>
        <end position="349"/>
    </location>
</feature>
<feature type="active site" description="Proton acceptor" evidence="1">
    <location>
        <position position="209"/>
    </location>
</feature>
<feature type="binding site" evidence="1">
    <location>
        <position position="31"/>
    </location>
    <ligand>
        <name>NADPH</name>
        <dbReference type="ChEBI" id="CHEBI:57783"/>
    </ligand>
</feature>
<feature type="binding site" evidence="1">
    <location>
        <position position="32"/>
    </location>
    <ligand>
        <name>NADPH</name>
        <dbReference type="ChEBI" id="CHEBI:57783"/>
    </ligand>
</feature>
<feature type="binding site" evidence="1">
    <location>
        <position position="52"/>
    </location>
    <ligand>
        <name>NADPH</name>
        <dbReference type="ChEBI" id="CHEBI:57783"/>
    </ligand>
</feature>
<feature type="binding site" evidence="1">
    <location>
        <position position="53"/>
    </location>
    <ligand>
        <name>NADPH</name>
        <dbReference type="ChEBI" id="CHEBI:57783"/>
    </ligand>
</feature>
<feature type="binding site" evidence="1">
    <location>
        <position position="126"/>
    </location>
    <ligand>
        <name>NADPH</name>
        <dbReference type="ChEBI" id="CHEBI:57783"/>
    </ligand>
</feature>
<feature type="binding site" evidence="1">
    <location>
        <position position="126"/>
    </location>
    <ligand>
        <name>sn-glycerol 3-phosphate</name>
        <dbReference type="ChEBI" id="CHEBI:57597"/>
    </ligand>
</feature>
<feature type="binding site" evidence="1">
    <location>
        <position position="154"/>
    </location>
    <ligand>
        <name>sn-glycerol 3-phosphate</name>
        <dbReference type="ChEBI" id="CHEBI:57597"/>
    </ligand>
</feature>
<feature type="binding site" evidence="1">
    <location>
        <position position="156"/>
    </location>
    <ligand>
        <name>sn-glycerol 3-phosphate</name>
        <dbReference type="ChEBI" id="CHEBI:57597"/>
    </ligand>
</feature>
<feature type="binding site" evidence="1">
    <location>
        <position position="158"/>
    </location>
    <ligand>
        <name>NADPH</name>
        <dbReference type="ChEBI" id="CHEBI:57783"/>
    </ligand>
</feature>
<feature type="binding site" evidence="1">
    <location>
        <position position="209"/>
    </location>
    <ligand>
        <name>sn-glycerol 3-phosphate</name>
        <dbReference type="ChEBI" id="CHEBI:57597"/>
    </ligand>
</feature>
<feature type="binding site" evidence="1">
    <location>
        <position position="262"/>
    </location>
    <ligand>
        <name>sn-glycerol 3-phosphate</name>
        <dbReference type="ChEBI" id="CHEBI:57597"/>
    </ligand>
</feature>
<feature type="binding site" evidence="1">
    <location>
        <position position="272"/>
    </location>
    <ligand>
        <name>sn-glycerol 3-phosphate</name>
        <dbReference type="ChEBI" id="CHEBI:57597"/>
    </ligand>
</feature>
<feature type="binding site" evidence="1">
    <location>
        <position position="273"/>
    </location>
    <ligand>
        <name>NADPH</name>
        <dbReference type="ChEBI" id="CHEBI:57783"/>
    </ligand>
</feature>
<feature type="binding site" evidence="1">
    <location>
        <position position="273"/>
    </location>
    <ligand>
        <name>sn-glycerol 3-phosphate</name>
        <dbReference type="ChEBI" id="CHEBI:57597"/>
    </ligand>
</feature>
<feature type="binding site" evidence="1">
    <location>
        <position position="274"/>
    </location>
    <ligand>
        <name>sn-glycerol 3-phosphate</name>
        <dbReference type="ChEBI" id="CHEBI:57597"/>
    </ligand>
</feature>
<feature type="binding site" evidence="1">
    <location>
        <position position="297"/>
    </location>
    <ligand>
        <name>NADPH</name>
        <dbReference type="ChEBI" id="CHEBI:57783"/>
    </ligand>
</feature>
<feature type="binding site" evidence="1">
    <location>
        <position position="299"/>
    </location>
    <ligand>
        <name>NADPH</name>
        <dbReference type="ChEBI" id="CHEBI:57783"/>
    </ligand>
</feature>
<evidence type="ECO:0000255" key="1">
    <source>
        <dbReference type="HAMAP-Rule" id="MF_00394"/>
    </source>
</evidence>
<keyword id="KW-0963">Cytoplasm</keyword>
<keyword id="KW-0444">Lipid biosynthesis</keyword>
<keyword id="KW-0443">Lipid metabolism</keyword>
<keyword id="KW-0520">NAD</keyword>
<keyword id="KW-0521">NADP</keyword>
<keyword id="KW-0547">Nucleotide-binding</keyword>
<keyword id="KW-0560">Oxidoreductase</keyword>
<keyword id="KW-0594">Phospholipid biosynthesis</keyword>
<keyword id="KW-1208">Phospholipid metabolism</keyword>
<keyword id="KW-1185">Reference proteome</keyword>
<name>GPDA_CLOTE</name>
<sequence>MILQEQELKWSLEKGKSNMTIKGITFIGGGSFGTALGIMLAKKGYNINIWDRKPHVIADINEKKENIKYLPNVVIPSNVKAYKGMKEALVGIKYVVISVPSHAIREICRNMKDYLKEDAIIISVAKGIEEHSGKRLSQIIKEELPKNPVVILSGPSHAEEVAQDIPTTVVVTSEDVKASLEVQNLFSTNKFRVYTNDDIIGVEIGGAVKNIIALAAGISDGIGYGDNTKAALMTRGINEIIRIGEKLGGQRETFWGLTGMGDMIVTCTSMHSRNRRAGLLIGKGLSMEEAIEEVGMVVEGIKACKAFYELKEKLKVSMPITDALYRVLFQGEDAKYCVYELMTRDKKDE</sequence>
<reference key="1">
    <citation type="journal article" date="2003" name="Proc. Natl. Acad. Sci. U.S.A.">
        <title>The genome sequence of Clostridium tetani, the causative agent of tetanus disease.</title>
        <authorList>
            <person name="Brueggemann H."/>
            <person name="Baeumer S."/>
            <person name="Fricke W.F."/>
            <person name="Wiezer A."/>
            <person name="Liesegang H."/>
            <person name="Decker I."/>
            <person name="Herzberg C."/>
            <person name="Martinez-Arias R."/>
            <person name="Merkl R."/>
            <person name="Henne A."/>
            <person name="Gottschalk G."/>
        </authorList>
    </citation>
    <scope>NUCLEOTIDE SEQUENCE [LARGE SCALE GENOMIC DNA]</scope>
    <source>
        <strain>Massachusetts / E88</strain>
    </source>
</reference>
<protein>
    <recommendedName>
        <fullName evidence="1">Glycerol-3-phosphate dehydrogenase [NAD(P)+]</fullName>
        <ecNumber evidence="1">1.1.1.94</ecNumber>
    </recommendedName>
    <alternativeName>
        <fullName evidence="1">NAD(P)(+)-dependent glycerol-3-phosphate dehydrogenase</fullName>
    </alternativeName>
    <alternativeName>
        <fullName evidence="1">NAD(P)H-dependent dihydroxyacetone-phosphate reductase</fullName>
    </alternativeName>
</protein>
<organism>
    <name type="scientific">Clostridium tetani (strain Massachusetts / E88)</name>
    <dbReference type="NCBI Taxonomy" id="212717"/>
    <lineage>
        <taxon>Bacteria</taxon>
        <taxon>Bacillati</taxon>
        <taxon>Bacillota</taxon>
        <taxon>Clostridia</taxon>
        <taxon>Eubacteriales</taxon>
        <taxon>Clostridiaceae</taxon>
        <taxon>Clostridium</taxon>
    </lineage>
</organism>
<proteinExistence type="inferred from homology"/>
<dbReference type="EC" id="1.1.1.94" evidence="1"/>
<dbReference type="EMBL" id="AE015927">
    <property type="protein sequence ID" value="AAO35713.1"/>
    <property type="molecule type" value="Genomic_DNA"/>
</dbReference>
<dbReference type="SMR" id="Q895X7"/>
<dbReference type="STRING" id="212717.CTC_01139"/>
<dbReference type="KEGG" id="ctc:CTC_01139"/>
<dbReference type="HOGENOM" id="CLU_033449_0_2_9"/>
<dbReference type="UniPathway" id="UPA00940"/>
<dbReference type="Proteomes" id="UP000001412">
    <property type="component" value="Chromosome"/>
</dbReference>
<dbReference type="GO" id="GO:0005829">
    <property type="term" value="C:cytosol"/>
    <property type="evidence" value="ECO:0007669"/>
    <property type="project" value="TreeGrafter"/>
</dbReference>
<dbReference type="GO" id="GO:0047952">
    <property type="term" value="F:glycerol-3-phosphate dehydrogenase [NAD(P)+] activity"/>
    <property type="evidence" value="ECO:0007669"/>
    <property type="project" value="UniProtKB-UniRule"/>
</dbReference>
<dbReference type="GO" id="GO:0051287">
    <property type="term" value="F:NAD binding"/>
    <property type="evidence" value="ECO:0007669"/>
    <property type="project" value="InterPro"/>
</dbReference>
<dbReference type="GO" id="GO:0005975">
    <property type="term" value="P:carbohydrate metabolic process"/>
    <property type="evidence" value="ECO:0007669"/>
    <property type="project" value="InterPro"/>
</dbReference>
<dbReference type="GO" id="GO:0046167">
    <property type="term" value="P:glycerol-3-phosphate biosynthetic process"/>
    <property type="evidence" value="ECO:0007669"/>
    <property type="project" value="UniProtKB-UniRule"/>
</dbReference>
<dbReference type="GO" id="GO:0046168">
    <property type="term" value="P:glycerol-3-phosphate catabolic process"/>
    <property type="evidence" value="ECO:0007669"/>
    <property type="project" value="InterPro"/>
</dbReference>
<dbReference type="GO" id="GO:0006650">
    <property type="term" value="P:glycerophospholipid metabolic process"/>
    <property type="evidence" value="ECO:0007669"/>
    <property type="project" value="UniProtKB-UniRule"/>
</dbReference>
<dbReference type="GO" id="GO:0008654">
    <property type="term" value="P:phospholipid biosynthetic process"/>
    <property type="evidence" value="ECO:0007669"/>
    <property type="project" value="UniProtKB-KW"/>
</dbReference>
<dbReference type="FunFam" id="1.10.1040.10:FF:000001">
    <property type="entry name" value="Glycerol-3-phosphate dehydrogenase [NAD(P)+]"/>
    <property type="match status" value="1"/>
</dbReference>
<dbReference type="FunFam" id="3.40.50.720:FF:000019">
    <property type="entry name" value="Glycerol-3-phosphate dehydrogenase [NAD(P)+]"/>
    <property type="match status" value="1"/>
</dbReference>
<dbReference type="Gene3D" id="1.10.1040.10">
    <property type="entry name" value="N-(1-d-carboxylethyl)-l-norvaline Dehydrogenase, domain 2"/>
    <property type="match status" value="1"/>
</dbReference>
<dbReference type="Gene3D" id="3.40.50.720">
    <property type="entry name" value="NAD(P)-binding Rossmann-like Domain"/>
    <property type="match status" value="1"/>
</dbReference>
<dbReference type="HAMAP" id="MF_00394">
    <property type="entry name" value="NAD_Glyc3P_dehydrog"/>
    <property type="match status" value="1"/>
</dbReference>
<dbReference type="InterPro" id="IPR008927">
    <property type="entry name" value="6-PGluconate_DH-like_C_sf"/>
</dbReference>
<dbReference type="InterPro" id="IPR013328">
    <property type="entry name" value="6PGD_dom2"/>
</dbReference>
<dbReference type="InterPro" id="IPR006168">
    <property type="entry name" value="G3P_DH_NAD-dep"/>
</dbReference>
<dbReference type="InterPro" id="IPR006109">
    <property type="entry name" value="G3P_DH_NAD-dep_C"/>
</dbReference>
<dbReference type="InterPro" id="IPR011128">
    <property type="entry name" value="G3P_DH_NAD-dep_N"/>
</dbReference>
<dbReference type="InterPro" id="IPR036291">
    <property type="entry name" value="NAD(P)-bd_dom_sf"/>
</dbReference>
<dbReference type="NCBIfam" id="NF000940">
    <property type="entry name" value="PRK00094.1-2"/>
    <property type="match status" value="1"/>
</dbReference>
<dbReference type="NCBIfam" id="NF000941">
    <property type="entry name" value="PRK00094.1-3"/>
    <property type="match status" value="1"/>
</dbReference>
<dbReference type="NCBIfam" id="NF000942">
    <property type="entry name" value="PRK00094.1-4"/>
    <property type="match status" value="1"/>
</dbReference>
<dbReference type="PANTHER" id="PTHR11728">
    <property type="entry name" value="GLYCEROL-3-PHOSPHATE DEHYDROGENASE"/>
    <property type="match status" value="1"/>
</dbReference>
<dbReference type="PANTHER" id="PTHR11728:SF1">
    <property type="entry name" value="GLYCEROL-3-PHOSPHATE DEHYDROGENASE [NAD(+)] 2, CHLOROPLASTIC"/>
    <property type="match status" value="1"/>
</dbReference>
<dbReference type="Pfam" id="PF07479">
    <property type="entry name" value="NAD_Gly3P_dh_C"/>
    <property type="match status" value="1"/>
</dbReference>
<dbReference type="Pfam" id="PF01210">
    <property type="entry name" value="NAD_Gly3P_dh_N"/>
    <property type="match status" value="1"/>
</dbReference>
<dbReference type="PIRSF" id="PIRSF000114">
    <property type="entry name" value="Glycerol-3-P_dh"/>
    <property type="match status" value="1"/>
</dbReference>
<dbReference type="PRINTS" id="PR00077">
    <property type="entry name" value="GPDHDRGNASE"/>
</dbReference>
<dbReference type="SUPFAM" id="SSF48179">
    <property type="entry name" value="6-phosphogluconate dehydrogenase C-terminal domain-like"/>
    <property type="match status" value="1"/>
</dbReference>
<dbReference type="SUPFAM" id="SSF51735">
    <property type="entry name" value="NAD(P)-binding Rossmann-fold domains"/>
    <property type="match status" value="1"/>
</dbReference>
<dbReference type="PROSITE" id="PS00957">
    <property type="entry name" value="NAD_G3PDH"/>
    <property type="match status" value="1"/>
</dbReference>
<comment type="function">
    <text evidence="1">Catalyzes the reduction of the glycolytic intermediate dihydroxyacetone phosphate (DHAP) to sn-glycerol 3-phosphate (G3P), the key precursor for phospholipid synthesis.</text>
</comment>
<comment type="catalytic activity">
    <reaction evidence="1">
        <text>sn-glycerol 3-phosphate + NAD(+) = dihydroxyacetone phosphate + NADH + H(+)</text>
        <dbReference type="Rhea" id="RHEA:11092"/>
        <dbReference type="ChEBI" id="CHEBI:15378"/>
        <dbReference type="ChEBI" id="CHEBI:57540"/>
        <dbReference type="ChEBI" id="CHEBI:57597"/>
        <dbReference type="ChEBI" id="CHEBI:57642"/>
        <dbReference type="ChEBI" id="CHEBI:57945"/>
        <dbReference type="EC" id="1.1.1.94"/>
    </reaction>
    <physiologicalReaction direction="right-to-left" evidence="1">
        <dbReference type="Rhea" id="RHEA:11094"/>
    </physiologicalReaction>
</comment>
<comment type="catalytic activity">
    <reaction evidence="1">
        <text>sn-glycerol 3-phosphate + NADP(+) = dihydroxyacetone phosphate + NADPH + H(+)</text>
        <dbReference type="Rhea" id="RHEA:11096"/>
        <dbReference type="ChEBI" id="CHEBI:15378"/>
        <dbReference type="ChEBI" id="CHEBI:57597"/>
        <dbReference type="ChEBI" id="CHEBI:57642"/>
        <dbReference type="ChEBI" id="CHEBI:57783"/>
        <dbReference type="ChEBI" id="CHEBI:58349"/>
        <dbReference type="EC" id="1.1.1.94"/>
    </reaction>
    <physiologicalReaction direction="right-to-left" evidence="1">
        <dbReference type="Rhea" id="RHEA:11098"/>
    </physiologicalReaction>
</comment>
<comment type="pathway">
    <text evidence="1">Membrane lipid metabolism; glycerophospholipid metabolism.</text>
</comment>
<comment type="subcellular location">
    <subcellularLocation>
        <location evidence="1">Cytoplasm</location>
    </subcellularLocation>
</comment>
<comment type="similarity">
    <text evidence="1">Belongs to the NAD-dependent glycerol-3-phosphate dehydrogenase family.</text>
</comment>
<accession>Q895X7</accession>